<name>LRSM1_HUMAN</name>
<gene>
    <name evidence="16" type="primary">LRSAM1</name>
    <name evidence="15" type="synonym">TAL</name>
    <name type="ORF">UNQ6496/PRO21356</name>
</gene>
<reference key="1">
    <citation type="journal article" date="2003" name="Genome Res.">
        <title>The secreted protein discovery initiative (SPDI), a large-scale effort to identify novel human secreted and transmembrane proteins: a bioinformatics assessment.</title>
        <authorList>
            <person name="Clark H.F."/>
            <person name="Gurney A.L."/>
            <person name="Abaya E."/>
            <person name="Baker K."/>
            <person name="Baldwin D.T."/>
            <person name="Brush J."/>
            <person name="Chen J."/>
            <person name="Chow B."/>
            <person name="Chui C."/>
            <person name="Crowley C."/>
            <person name="Currell B."/>
            <person name="Deuel B."/>
            <person name="Dowd P."/>
            <person name="Eaton D."/>
            <person name="Foster J.S."/>
            <person name="Grimaldi C."/>
            <person name="Gu Q."/>
            <person name="Hass P.E."/>
            <person name="Heldens S."/>
            <person name="Huang A."/>
            <person name="Kim H.S."/>
            <person name="Klimowski L."/>
            <person name="Jin Y."/>
            <person name="Johnson S."/>
            <person name="Lee J."/>
            <person name="Lewis L."/>
            <person name="Liao D."/>
            <person name="Mark M.R."/>
            <person name="Robbie E."/>
            <person name="Sanchez C."/>
            <person name="Schoenfeld J."/>
            <person name="Seshagiri S."/>
            <person name="Simmons L."/>
            <person name="Singh J."/>
            <person name="Smith V."/>
            <person name="Stinson J."/>
            <person name="Vagts A."/>
            <person name="Vandlen R.L."/>
            <person name="Watanabe C."/>
            <person name="Wieand D."/>
            <person name="Woods K."/>
            <person name="Xie M.-H."/>
            <person name="Yansura D.G."/>
            <person name="Yi S."/>
            <person name="Yu G."/>
            <person name="Yuan J."/>
            <person name="Zhang M."/>
            <person name="Zhang Z."/>
            <person name="Goddard A.D."/>
            <person name="Wood W.I."/>
            <person name="Godowski P.J."/>
            <person name="Gray A.M."/>
        </authorList>
    </citation>
    <scope>NUCLEOTIDE SEQUENCE [LARGE SCALE MRNA] (ISOFORM 1)</scope>
</reference>
<reference key="2">
    <citation type="journal article" date="2004" name="Nat. Genet.">
        <title>Complete sequencing and characterization of 21,243 full-length human cDNAs.</title>
        <authorList>
            <person name="Ota T."/>
            <person name="Suzuki Y."/>
            <person name="Nishikawa T."/>
            <person name="Otsuki T."/>
            <person name="Sugiyama T."/>
            <person name="Irie R."/>
            <person name="Wakamatsu A."/>
            <person name="Hayashi K."/>
            <person name="Sato H."/>
            <person name="Nagai K."/>
            <person name="Kimura K."/>
            <person name="Makita H."/>
            <person name="Sekine M."/>
            <person name="Obayashi M."/>
            <person name="Nishi T."/>
            <person name="Shibahara T."/>
            <person name="Tanaka T."/>
            <person name="Ishii S."/>
            <person name="Yamamoto J."/>
            <person name="Saito K."/>
            <person name="Kawai Y."/>
            <person name="Isono Y."/>
            <person name="Nakamura Y."/>
            <person name="Nagahari K."/>
            <person name="Murakami K."/>
            <person name="Yasuda T."/>
            <person name="Iwayanagi T."/>
            <person name="Wagatsuma M."/>
            <person name="Shiratori A."/>
            <person name="Sudo H."/>
            <person name="Hosoiri T."/>
            <person name="Kaku Y."/>
            <person name="Kodaira H."/>
            <person name="Kondo H."/>
            <person name="Sugawara M."/>
            <person name="Takahashi M."/>
            <person name="Kanda K."/>
            <person name="Yokoi T."/>
            <person name="Furuya T."/>
            <person name="Kikkawa E."/>
            <person name="Omura Y."/>
            <person name="Abe K."/>
            <person name="Kamihara K."/>
            <person name="Katsuta N."/>
            <person name="Sato K."/>
            <person name="Tanikawa M."/>
            <person name="Yamazaki M."/>
            <person name="Ninomiya K."/>
            <person name="Ishibashi T."/>
            <person name="Yamashita H."/>
            <person name="Murakawa K."/>
            <person name="Fujimori K."/>
            <person name="Tanai H."/>
            <person name="Kimata M."/>
            <person name="Watanabe M."/>
            <person name="Hiraoka S."/>
            <person name="Chiba Y."/>
            <person name="Ishida S."/>
            <person name="Ono Y."/>
            <person name="Takiguchi S."/>
            <person name="Watanabe S."/>
            <person name="Yosida M."/>
            <person name="Hotuta T."/>
            <person name="Kusano J."/>
            <person name="Kanehori K."/>
            <person name="Takahashi-Fujii A."/>
            <person name="Hara H."/>
            <person name="Tanase T.-O."/>
            <person name="Nomura Y."/>
            <person name="Togiya S."/>
            <person name="Komai F."/>
            <person name="Hara R."/>
            <person name="Takeuchi K."/>
            <person name="Arita M."/>
            <person name="Imose N."/>
            <person name="Musashino K."/>
            <person name="Yuuki H."/>
            <person name="Oshima A."/>
            <person name="Sasaki N."/>
            <person name="Aotsuka S."/>
            <person name="Yoshikawa Y."/>
            <person name="Matsunawa H."/>
            <person name="Ichihara T."/>
            <person name="Shiohata N."/>
            <person name="Sano S."/>
            <person name="Moriya S."/>
            <person name="Momiyama H."/>
            <person name="Satoh N."/>
            <person name="Takami S."/>
            <person name="Terashima Y."/>
            <person name="Suzuki O."/>
            <person name="Nakagawa S."/>
            <person name="Senoh A."/>
            <person name="Mizoguchi H."/>
            <person name="Goto Y."/>
            <person name="Shimizu F."/>
            <person name="Wakebe H."/>
            <person name="Hishigaki H."/>
            <person name="Watanabe T."/>
            <person name="Sugiyama A."/>
            <person name="Takemoto M."/>
            <person name="Kawakami B."/>
            <person name="Yamazaki M."/>
            <person name="Watanabe K."/>
            <person name="Kumagai A."/>
            <person name="Itakura S."/>
            <person name="Fukuzumi Y."/>
            <person name="Fujimori Y."/>
            <person name="Komiyama M."/>
            <person name="Tashiro H."/>
            <person name="Tanigami A."/>
            <person name="Fujiwara T."/>
            <person name="Ono T."/>
            <person name="Yamada K."/>
            <person name="Fujii Y."/>
            <person name="Ozaki K."/>
            <person name="Hirao M."/>
            <person name="Ohmori Y."/>
            <person name="Kawabata A."/>
            <person name="Hikiji T."/>
            <person name="Kobatake N."/>
            <person name="Inagaki H."/>
            <person name="Ikema Y."/>
            <person name="Okamoto S."/>
            <person name="Okitani R."/>
            <person name="Kawakami T."/>
            <person name="Noguchi S."/>
            <person name="Itoh T."/>
            <person name="Shigeta K."/>
            <person name="Senba T."/>
            <person name="Matsumura K."/>
            <person name="Nakajima Y."/>
            <person name="Mizuno T."/>
            <person name="Morinaga M."/>
            <person name="Sasaki M."/>
            <person name="Togashi T."/>
            <person name="Oyama M."/>
            <person name="Hata H."/>
            <person name="Watanabe M."/>
            <person name="Komatsu T."/>
            <person name="Mizushima-Sugano J."/>
            <person name="Satoh T."/>
            <person name="Shirai Y."/>
            <person name="Takahashi Y."/>
            <person name="Nakagawa K."/>
            <person name="Okumura K."/>
            <person name="Nagase T."/>
            <person name="Nomura N."/>
            <person name="Kikuchi H."/>
            <person name="Masuho Y."/>
            <person name="Yamashita R."/>
            <person name="Nakai K."/>
            <person name="Yada T."/>
            <person name="Nakamura Y."/>
            <person name="Ohara O."/>
            <person name="Isogai T."/>
            <person name="Sugano S."/>
        </authorList>
    </citation>
    <scope>NUCLEOTIDE SEQUENCE [LARGE SCALE MRNA] (ISOFORMS 1; 2 AND 3)</scope>
    <source>
        <tissue>Brain</tissue>
        <tissue>Teratocarcinoma</tissue>
    </source>
</reference>
<reference key="3">
    <citation type="journal article" date="2004" name="Nature">
        <title>DNA sequence and analysis of human chromosome 9.</title>
        <authorList>
            <person name="Humphray S.J."/>
            <person name="Oliver K."/>
            <person name="Hunt A.R."/>
            <person name="Plumb R.W."/>
            <person name="Loveland J.E."/>
            <person name="Howe K.L."/>
            <person name="Andrews T.D."/>
            <person name="Searle S."/>
            <person name="Hunt S.E."/>
            <person name="Scott C.E."/>
            <person name="Jones M.C."/>
            <person name="Ainscough R."/>
            <person name="Almeida J.P."/>
            <person name="Ambrose K.D."/>
            <person name="Ashwell R.I.S."/>
            <person name="Babbage A.K."/>
            <person name="Babbage S."/>
            <person name="Bagguley C.L."/>
            <person name="Bailey J."/>
            <person name="Banerjee R."/>
            <person name="Barker D.J."/>
            <person name="Barlow K.F."/>
            <person name="Bates K."/>
            <person name="Beasley H."/>
            <person name="Beasley O."/>
            <person name="Bird C.P."/>
            <person name="Bray-Allen S."/>
            <person name="Brown A.J."/>
            <person name="Brown J.Y."/>
            <person name="Burford D."/>
            <person name="Burrill W."/>
            <person name="Burton J."/>
            <person name="Carder C."/>
            <person name="Carter N.P."/>
            <person name="Chapman J.C."/>
            <person name="Chen Y."/>
            <person name="Clarke G."/>
            <person name="Clark S.Y."/>
            <person name="Clee C.M."/>
            <person name="Clegg S."/>
            <person name="Collier R.E."/>
            <person name="Corby N."/>
            <person name="Crosier M."/>
            <person name="Cummings A.T."/>
            <person name="Davies J."/>
            <person name="Dhami P."/>
            <person name="Dunn M."/>
            <person name="Dutta I."/>
            <person name="Dyer L.W."/>
            <person name="Earthrowl M.E."/>
            <person name="Faulkner L."/>
            <person name="Fleming C.J."/>
            <person name="Frankish A."/>
            <person name="Frankland J.A."/>
            <person name="French L."/>
            <person name="Fricker D.G."/>
            <person name="Garner P."/>
            <person name="Garnett J."/>
            <person name="Ghori J."/>
            <person name="Gilbert J.G.R."/>
            <person name="Glison C."/>
            <person name="Grafham D.V."/>
            <person name="Gribble S."/>
            <person name="Griffiths C."/>
            <person name="Griffiths-Jones S."/>
            <person name="Grocock R."/>
            <person name="Guy J."/>
            <person name="Hall R.E."/>
            <person name="Hammond S."/>
            <person name="Harley J.L."/>
            <person name="Harrison E.S.I."/>
            <person name="Hart E.A."/>
            <person name="Heath P.D."/>
            <person name="Henderson C.D."/>
            <person name="Hopkins B.L."/>
            <person name="Howard P.J."/>
            <person name="Howden P.J."/>
            <person name="Huckle E."/>
            <person name="Johnson C."/>
            <person name="Johnson D."/>
            <person name="Joy A.A."/>
            <person name="Kay M."/>
            <person name="Keenan S."/>
            <person name="Kershaw J.K."/>
            <person name="Kimberley A.M."/>
            <person name="King A."/>
            <person name="Knights A."/>
            <person name="Laird G.K."/>
            <person name="Langford C."/>
            <person name="Lawlor S."/>
            <person name="Leongamornlert D.A."/>
            <person name="Leversha M."/>
            <person name="Lloyd C."/>
            <person name="Lloyd D.M."/>
            <person name="Lovell J."/>
            <person name="Martin S."/>
            <person name="Mashreghi-Mohammadi M."/>
            <person name="Matthews L."/>
            <person name="McLaren S."/>
            <person name="McLay K.E."/>
            <person name="McMurray A."/>
            <person name="Milne S."/>
            <person name="Nickerson T."/>
            <person name="Nisbett J."/>
            <person name="Nordsiek G."/>
            <person name="Pearce A.V."/>
            <person name="Peck A.I."/>
            <person name="Porter K.M."/>
            <person name="Pandian R."/>
            <person name="Pelan S."/>
            <person name="Phillimore B."/>
            <person name="Povey S."/>
            <person name="Ramsey Y."/>
            <person name="Rand V."/>
            <person name="Scharfe M."/>
            <person name="Sehra H.K."/>
            <person name="Shownkeen R."/>
            <person name="Sims S.K."/>
            <person name="Skuce C.D."/>
            <person name="Smith M."/>
            <person name="Steward C.A."/>
            <person name="Swarbreck D."/>
            <person name="Sycamore N."/>
            <person name="Tester J."/>
            <person name="Thorpe A."/>
            <person name="Tracey A."/>
            <person name="Tromans A."/>
            <person name="Thomas D.W."/>
            <person name="Wall M."/>
            <person name="Wallis J.M."/>
            <person name="West A.P."/>
            <person name="Whitehead S.L."/>
            <person name="Willey D.L."/>
            <person name="Williams S.A."/>
            <person name="Wilming L."/>
            <person name="Wray P.W."/>
            <person name="Young L."/>
            <person name="Ashurst J.L."/>
            <person name="Coulson A."/>
            <person name="Blocker H."/>
            <person name="Durbin R.M."/>
            <person name="Sulston J.E."/>
            <person name="Hubbard T."/>
            <person name="Jackson M.J."/>
            <person name="Bentley D.R."/>
            <person name="Beck S."/>
            <person name="Rogers J."/>
            <person name="Dunham I."/>
        </authorList>
    </citation>
    <scope>NUCLEOTIDE SEQUENCE [LARGE SCALE GENOMIC DNA]</scope>
</reference>
<reference key="4">
    <citation type="journal article" date="2004" name="Genome Res.">
        <title>The status, quality, and expansion of the NIH full-length cDNA project: the Mammalian Gene Collection (MGC).</title>
        <authorList>
            <consortium name="The MGC Project Team"/>
        </authorList>
    </citation>
    <scope>NUCLEOTIDE SEQUENCE [LARGE SCALE MRNA] (ISOFORM 1)</scope>
    <scope>VARIANT ASP-318</scope>
    <source>
        <tissue>Skin</tissue>
    </source>
</reference>
<reference key="5">
    <citation type="journal article" date="2004" name="Genes Dev.">
        <title>Tal, a Tsg101-specific E3 ubiquitin ligase, regulates receptor endocytosis and retrovirus budding.</title>
        <authorList>
            <person name="Amit I."/>
            <person name="Yakir L."/>
            <person name="Katz M."/>
            <person name="Zwang Y."/>
            <person name="Marmor M.D."/>
            <person name="Citri A."/>
            <person name="Shtiegman K."/>
            <person name="Alroy I."/>
            <person name="Tuvia S."/>
            <person name="Reiss Y."/>
            <person name="Roubini E."/>
            <person name="Cohen M."/>
            <person name="Wides R."/>
            <person name="Bacharach E."/>
            <person name="Schubert U."/>
            <person name="Yarden Y."/>
        </authorList>
    </citation>
    <scope>FUNCTION</scope>
    <scope>SUBCELLULAR LOCATION</scope>
    <scope>DOMAIN</scope>
    <scope>MUTAGENESIS OF CYS-675; HIS-692 AND 649-PRO--PRO-664</scope>
</reference>
<reference key="6">
    <citation type="journal article" date="2007" name="Science">
        <title>Parallels between cytokinesis and retroviral budding: a role for the ESCRT machinery.</title>
        <authorList>
            <person name="Carlton J.G."/>
            <person name="Martin-Serrano J."/>
        </authorList>
    </citation>
    <scope>INTERACTION WITH TSG101</scope>
</reference>
<reference key="7">
    <citation type="journal article" date="2008" name="Proc. Natl. Acad. Sci. U.S.A.">
        <title>A quantitative atlas of mitotic phosphorylation.</title>
        <authorList>
            <person name="Dephoure N."/>
            <person name="Zhou C."/>
            <person name="Villen J."/>
            <person name="Beausoleil S.A."/>
            <person name="Bakalarski C.E."/>
            <person name="Elledge S.J."/>
            <person name="Gygi S.P."/>
        </authorList>
    </citation>
    <scope>PHOSPHORYLATION [LARGE SCALE ANALYSIS] AT SER-234 AND SER-604</scope>
    <scope>IDENTIFICATION BY MASS SPECTROMETRY [LARGE SCALE ANALYSIS]</scope>
    <source>
        <tissue>Cervix carcinoma</tissue>
    </source>
</reference>
<reference key="8">
    <citation type="journal article" date="2010" name="PLoS Genet.">
        <title>Mutation in the gene encoding ubiquitin ligase LRSAM1 in patients with Charcot-Marie-Tooth disease.</title>
        <authorList>
            <person name="Guernsey D.L."/>
            <person name="Jiang H."/>
            <person name="Bedard K."/>
            <person name="Evans S.C."/>
            <person name="Ferguson M."/>
            <person name="Matsuoka M."/>
            <person name="Macgillivray C."/>
            <person name="Nightingale M."/>
            <person name="Perry S."/>
            <person name="Rideout A.L."/>
            <person name="Orr A."/>
            <person name="Ludman M."/>
            <person name="Skidmore D.L."/>
            <person name="Benstead T."/>
            <person name="Samuels M.E."/>
        </authorList>
    </citation>
    <scope>INVOLVEMENT IN CMT2P</scope>
</reference>
<reference key="9">
    <citation type="journal article" date="2010" name="Sci. Signal.">
        <title>Quantitative phosphoproteomics reveals widespread full phosphorylation site occupancy during mitosis.</title>
        <authorList>
            <person name="Olsen J.V."/>
            <person name="Vermeulen M."/>
            <person name="Santamaria A."/>
            <person name="Kumar C."/>
            <person name="Miller M.L."/>
            <person name="Jensen L.J."/>
            <person name="Gnad F."/>
            <person name="Cox J."/>
            <person name="Jensen T.S."/>
            <person name="Nigg E.A."/>
            <person name="Brunak S."/>
            <person name="Mann M."/>
        </authorList>
    </citation>
    <scope>PHOSPHORYLATION [LARGE SCALE ANALYSIS] AT SER-604</scope>
    <scope>IDENTIFICATION BY MASS SPECTROMETRY [LARGE SCALE ANALYSIS]</scope>
    <source>
        <tissue>Cervix carcinoma</tissue>
    </source>
</reference>
<reference key="10">
    <citation type="journal article" date="2011" name="BMC Syst. Biol.">
        <title>Initial characterization of the human central proteome.</title>
        <authorList>
            <person name="Burkard T.R."/>
            <person name="Planyavsky M."/>
            <person name="Kaupe I."/>
            <person name="Breitwieser F.P."/>
            <person name="Buerckstuemmer T."/>
            <person name="Bennett K.L."/>
            <person name="Superti-Furga G."/>
            <person name="Colinge J."/>
        </authorList>
    </citation>
    <scope>IDENTIFICATION BY MASS SPECTROMETRY [LARGE SCALE ANALYSIS]</scope>
</reference>
<reference key="11">
    <citation type="journal article" date="2012" name="Cell Host Microbe">
        <title>The LRR and RING domain protein LRSAM1 is an E3 ligase crucial for ubiquitin-dependent autophagy of intracellular Salmonella Typhimurium.</title>
        <authorList>
            <person name="Huett A."/>
            <person name="Heath R.J."/>
            <person name="Begun J."/>
            <person name="Sassi S.O."/>
            <person name="Baxt L.A."/>
            <person name="Vyas J.M."/>
            <person name="Goldberg M.B."/>
            <person name="Xavier R.J."/>
        </authorList>
    </citation>
    <scope>FUNCTION</scope>
    <scope>SUBCELLULAR LOCATION</scope>
</reference>
<reference key="12">
    <citation type="journal article" date="2012" name="Hum. Mol. Genet.">
        <title>A frameshift mutation in LRSAM1 is responsible for a dominant hereditary polyneuropathy.</title>
        <authorList>
            <person name="Weterman M.A."/>
            <person name="Sorrentino V."/>
            <person name="Kasher P.R."/>
            <person name="Jakobs M.E."/>
            <person name="van Engelen B.G."/>
            <person name="Fluiter K."/>
            <person name="de Wissel M.B."/>
            <person name="Sizarov A."/>
            <person name="Nurnberg G."/>
            <person name="Nurnberg P."/>
            <person name="Zelcer N."/>
            <person name="Schelhaas H.J."/>
            <person name="Baas F."/>
        </authorList>
    </citation>
    <scope>TISSUE SPECIFICITY</scope>
    <scope>INVOLVEMENT IN CMT2P</scope>
</reference>
<reference key="13">
    <citation type="journal article" date="2014" name="Autophagy">
        <title>PHF23 (plant homeodomain finger protein 23) negatively regulates cell autophagy by promoting ubiquitination and degradation of E3 ligase LRSAM1.</title>
        <authorList>
            <person name="Wang Z."/>
            <person name="Hu J."/>
            <person name="Li G."/>
            <person name="Qu L."/>
            <person name="He Q."/>
            <person name="Lou Y."/>
            <person name="Song Q."/>
            <person name="Ma D."/>
            <person name="Chen Y."/>
        </authorList>
    </citation>
    <scope>INTERACTION WITH PHF23</scope>
    <scope>FUNCTION</scope>
    <scope>UBIQUITINATION</scope>
</reference>
<reference key="14">
    <citation type="journal article" date="2014" name="J. Proteomics">
        <title>An enzyme assisted RP-RPLC approach for in-depth analysis of human liver phosphoproteome.</title>
        <authorList>
            <person name="Bian Y."/>
            <person name="Song C."/>
            <person name="Cheng K."/>
            <person name="Dong M."/>
            <person name="Wang F."/>
            <person name="Huang J."/>
            <person name="Sun D."/>
            <person name="Wang L."/>
            <person name="Ye M."/>
            <person name="Zou H."/>
        </authorList>
    </citation>
    <scope>IDENTIFICATION BY MASS SPECTROMETRY [LARGE SCALE ANALYSIS]</scope>
    <source>
        <tissue>Liver</tissue>
    </source>
</reference>
<reference key="15">
    <citation type="journal article" date="2016" name="Ann. Neurol.">
        <title>A novel missense mutation of CMT2P alters transcription machinery.</title>
        <authorList>
            <person name="Hu B."/>
            <person name="Arpag S."/>
            <person name="Zuchner S."/>
            <person name="Li J."/>
        </authorList>
    </citation>
    <scope>VARIANT CMT2P ARG-694</scope>
    <scope>CHARACTERIZATION OF VARIANT CMT2P ARG-694</scope>
    <scope>INTERACTION WITH FUS</scope>
    <scope>SUBCELLULAR LOCATION</scope>
</reference>
<reference key="16">
    <citation type="journal article" date="2016" name="Ann. Neurol.">
        <title>Charcot-Marie-Tooth disease type 2G redefined by a novel mutation in LRSAM1.</title>
        <authorList>
            <person name="Peeters K."/>
            <person name="Palaima P."/>
            <person name="Pelayo-Negro A.L."/>
            <person name="Garcia A."/>
            <person name="Gallardo E."/>
            <person name="Garcia-Barredo R."/>
            <person name="Mateiu L."/>
            <person name="Baets J."/>
            <person name="Menten B."/>
            <person name="De Vriendt E."/>
            <person name="De Jonghe P."/>
            <person name="Timmerman V."/>
            <person name="Infante J."/>
            <person name="Berciano J."/>
            <person name="Jordanova A."/>
        </authorList>
    </citation>
    <scope>VARIANT CMT2P TYR-694</scope>
    <scope>CHARACTERIZATION OF VARIANT CMT2P TYR-694</scope>
</reference>
<comment type="function">
    <text evidence="5 10 11">E3 ubiquitin-protein ligase that mediates monoubiquitination of TSG101 at multiple sites, leading to inactivate the ability of TSG101 to sort endocytic (EGF receptors) and exocytic (HIV-1 viral proteins) cargos (PubMed:15256501). Bacterial recognition protein that defends the cytoplasm from invasive pathogens (PubMed:23245322). Localizes to several intracellular bacterial pathogens and generates the bacteria-associated ubiquitin signal leading to autophagy-mediated intracellular bacteria degradation (xenophagy) (PubMed:23245322, PubMed:25484098).</text>
</comment>
<comment type="catalytic activity">
    <reaction evidence="5 10">
        <text>S-ubiquitinyl-[E2 ubiquitin-conjugating enzyme]-L-cysteine + [acceptor protein]-L-lysine = [E2 ubiquitin-conjugating enzyme]-L-cysteine + N(6)-ubiquitinyl-[acceptor protein]-L-lysine.</text>
        <dbReference type="EC" id="2.3.2.27"/>
    </reaction>
</comment>
<comment type="pathway">
    <text evidence="5 10">Protein modification; protein ubiquitination.</text>
</comment>
<comment type="subunit">
    <text evidence="7 11 12">Interacts with TSG101 (PubMed:17556548). Interacts with PHF23 (PubMed:25484098). Interacts with FUS (PubMed:27615052).</text>
</comment>
<comment type="interaction">
    <interactant intactId="EBI-720984">
        <id>Q6UWE0</id>
    </interactant>
    <interactant intactId="EBI-930964">
        <id>P54253</id>
        <label>ATXN1</label>
    </interactant>
    <organismsDiffer>false</organismsDiffer>
    <experiments>4</experiments>
</comment>
<comment type="interaction">
    <interactant intactId="EBI-720984">
        <id>Q6UWE0</id>
    </interactant>
    <interactant intactId="EBI-1045350">
        <id>Q16204</id>
        <label>CCDC6</label>
    </interactant>
    <organismsDiffer>false</organismsDiffer>
    <experiments>3</experiments>
</comment>
<comment type="interaction">
    <interactant intactId="EBI-720984">
        <id>Q6UWE0</id>
    </interactant>
    <interactant intactId="EBI-399105">
        <id>Q9NPF5</id>
        <label>DMAP1</label>
    </interactant>
    <organismsDiffer>false</organismsDiffer>
    <experiments>3</experiments>
</comment>
<comment type="interaction">
    <interactant intactId="EBI-720984">
        <id>Q6UWE0</id>
    </interactant>
    <interactant intactId="EBI-3386192">
        <id>P07098</id>
        <label>LIPF</label>
    </interactant>
    <organismsDiffer>false</organismsDiffer>
    <experiments>2</experiments>
</comment>
<comment type="interaction">
    <interactant intactId="EBI-720984">
        <id>Q6UWE0</id>
    </interactant>
    <interactant intactId="EBI-710997">
        <id>P54274</id>
        <label>TERF1</label>
    </interactant>
    <organismsDiffer>false</organismsDiffer>
    <experiments>2</experiments>
</comment>
<comment type="interaction">
    <interactant intactId="EBI-720984">
        <id>Q6UWE0</id>
    </interactant>
    <interactant intactId="EBI-346882">
        <id>Q99816</id>
        <label>TSG101</label>
    </interactant>
    <organismsDiffer>false</organismsDiffer>
    <experiments>8</experiments>
</comment>
<comment type="interaction">
    <interactant intactId="EBI-720984">
        <id>Q6UWE0</id>
    </interactant>
    <interactant intactId="EBI-10180829">
        <id>Q7KZS0</id>
        <label>UBE2I</label>
    </interactant>
    <organismsDiffer>false</organismsDiffer>
    <experiments>3</experiments>
</comment>
<comment type="interaction">
    <interactant intactId="EBI-720984">
        <id>Q6UWE0</id>
    </interactant>
    <interactant intactId="EBI-1052908">
        <id>P61088</id>
        <label>UBE2N</label>
    </interactant>
    <organismsDiffer>false</organismsDiffer>
    <experiments>3</experiments>
</comment>
<comment type="interaction">
    <interactant intactId="EBI-720984">
        <id>Q6UWE0</id>
    </interactant>
    <interactant intactId="EBI-2815120">
        <id>Q6GPH4</id>
        <label>XAF1</label>
    </interactant>
    <organismsDiffer>false</organismsDiffer>
    <experiments>3</experiments>
</comment>
<comment type="interaction">
    <interactant intactId="EBI-720984">
        <id>Q6UWE0</id>
    </interactant>
    <interactant intactId="EBI-11529334">
        <id>Q9H898-2</id>
        <label>ZMAT4</label>
    </interactant>
    <organismsDiffer>false</organismsDiffer>
    <experiments>3</experiments>
</comment>
<comment type="interaction">
    <interactant intactId="EBI-720984">
        <id>Q6UWE0</id>
    </interactant>
    <interactant intactId="EBI-400452">
        <id>P56959</id>
        <label>Fus</label>
    </interactant>
    <organismsDiffer>true</organismsDiffer>
    <experiments>2</experiments>
</comment>
<comment type="subcellular location">
    <subcellularLocation>
        <location evidence="5 12">Cytoplasm</location>
    </subcellularLocation>
    <text evidence="5 10">Displays a punctuate distribution and localizes to a submembranal ring (PubMed:15256501). Localizes to intracellular bacterial pathogens (PubMed:23245322).</text>
</comment>
<comment type="alternative products">
    <event type="alternative splicing"/>
    <isoform>
        <id>Q6UWE0-1</id>
        <name>1</name>
        <sequence type="displayed"/>
    </isoform>
    <isoform>
        <id>Q6UWE0-2</id>
        <name>2</name>
        <sequence type="described" ref="VSP_012661"/>
    </isoform>
    <isoform>
        <id>Q6UWE0-3</id>
        <name>3</name>
        <sequence type="described" ref="VSP_012660"/>
    </isoform>
</comment>
<comment type="tissue specificity">
    <text evidence="9">Highly expressed in adult spinal cord motoneurons as well as in fetal spinal cord and muscle tissue.</text>
</comment>
<comment type="domain">
    <text evidence="5">The coiled coil domains interact with the SB domain of TSG101.</text>
</comment>
<comment type="domain">
    <text evidence="5">The PTAP motifs mediate the binding to UEV domains.</text>
</comment>
<comment type="domain">
    <text evidence="10">The LRR domain is necessary and sufficient for localization to bacterial targets.</text>
</comment>
<comment type="domain">
    <text evidence="10">The RING domain is required for ubiquitination.</text>
</comment>
<comment type="PTM">
    <text evidence="11">Ubiquitination promoted by PHF23 leads to proteasomal degradation.</text>
</comment>
<comment type="disease" evidence="8 9 12 13">
    <disease id="DI-03339">
        <name>Charcot-Marie-Tooth disease, axonal, type 2P</name>
        <acronym>CMT2P</acronym>
        <description>An axonal form of Charcot-Marie-Tooth disease, a disorder of the peripheral nervous system, characterized by progressive weakness and atrophy, initially of the peroneal muscles and later of the distal muscles of the arms. Charcot-Marie-Tooth disease is classified in two main groups on the basis of electrophysiologic properties and histopathology: primary peripheral demyelinating neuropathies (designated CMT1 when they are dominantly inherited) and primary peripheral axonal neuropathies (CMT2). Neuropathies of the CMT2 group are characterized by signs of axonal degeneration in the absence of obvious myelin alterations, normal or slightly reduced nerve conduction velocities, and progressive distal muscle weakness and atrophy.</description>
        <dbReference type="MIM" id="614436"/>
    </disease>
    <text>The disease is caused by variants affecting the gene represented in this entry.</text>
</comment>
<protein>
    <recommendedName>
        <fullName evidence="17">E3 ubiquitin-protein ligase LRSAM1</fullName>
        <ecNumber evidence="5 10">2.3.2.27</ecNumber>
    </recommendedName>
    <alternativeName>
        <fullName evidence="16">Leucine-rich repeat and sterile alpha motif-containing protein 1</fullName>
    </alternativeName>
    <alternativeName>
        <fullName evidence="17">RING-type E3 ubiquitin transferase LRSAM1</fullName>
    </alternativeName>
    <alternativeName>
        <fullName evidence="15">Tsg101-associated ligase</fullName>
        <shortName evidence="15">hTAL</shortName>
    </alternativeName>
</protein>
<proteinExistence type="evidence at protein level"/>
<sequence length="723" mass="83594">MPLFFRKRKPSEEARKRLEYQMCLAKEAGADDILDISKCELSEIPFGAFATCKVLQKKVLIVHTNHLTSLLPKSCSLLSLATIKVLDLHDNQLTALPDDLGQLTALQVLNVERNQLMQLPRSIGNLTQLQTLNVKDNKLKELPDTVGELRSLRTLNISGNEIQRLPQMLAHVRTLEMLSLDASAMVYPPREVCGAGTAAILQFLCKESGLEYYPPSQYLLPILEQDGIENSRDSPDGPTDRFSREELEWQNRFSDYEKRKEQKMLEKLEFERRLELGQREHTQLLQQSSSQKDEILQTVKEEQSRLEQGLSEHQRHLNAERQRLQEQLKQTEQNISSRIQKLLQDNQRQKKSSEILKSLENERIRMEQLMSITQEETESLRRRDVASAMQQMLTESCKNRLIQMAYESQRQNLVQQACSSMAEMDERFQQILSWQQMDQNKAISQILQESAMQKAAFEALQVKKDLMHRQIRSQIKLIETELLQLTQLELKRKSLDTESLQEMISEQRWALSSLLQQLLKEKQQREEELREILTELEAKSETRQENYWLIQYQRLLNQKPLSLKLQEEGMERQLVALLEELSAEHYLPIFAHHRLSLDLLSQMSPGDLAKVGVSEAGLQHEILRRVQELLDAARIQPELKPPMGEVVTPTAPQEPPESVRPSAPPAELEVQASECVVCLEREAQMIFLNCGHVCCCQQCCQPLRTCPLCRQDIAQRLRIYHSS</sequence>
<feature type="chain" id="PRO_0000055923" description="E3 ubiquitin-protein ligase LRSAM1">
    <location>
        <begin position="1"/>
        <end position="723"/>
    </location>
</feature>
<feature type="repeat" description="LRR 1">
    <location>
        <begin position="30"/>
        <end position="51"/>
    </location>
</feature>
<feature type="repeat" description="LRR 2">
    <location>
        <begin position="56"/>
        <end position="77"/>
    </location>
</feature>
<feature type="repeat" description="LRR 3">
    <location>
        <begin position="82"/>
        <end position="103"/>
    </location>
</feature>
<feature type="repeat" description="LRR 4">
    <location>
        <begin position="105"/>
        <end position="127"/>
    </location>
</feature>
<feature type="repeat" description="LRR 5">
    <location>
        <begin position="128"/>
        <end position="149"/>
    </location>
</feature>
<feature type="repeat" description="LRR 6">
    <location>
        <begin position="151"/>
        <end position="172"/>
    </location>
</feature>
<feature type="domain" description="SAM" evidence="3">
    <location>
        <begin position="569"/>
        <end position="632"/>
    </location>
</feature>
<feature type="zinc finger region" description="RING-type" evidence="2">
    <location>
        <begin position="675"/>
        <end position="710"/>
    </location>
</feature>
<feature type="region of interest" description="Disordered" evidence="4">
    <location>
        <begin position="282"/>
        <end position="314"/>
    </location>
</feature>
<feature type="region of interest" description="Disordered" evidence="4">
    <location>
        <begin position="642"/>
        <end position="665"/>
    </location>
</feature>
<feature type="coiled-coil region" evidence="1">
    <location>
        <begin position="254"/>
        <end position="380"/>
    </location>
</feature>
<feature type="coiled-coil region" evidence="1">
    <location>
        <begin position="510"/>
        <end position="562"/>
    </location>
</feature>
<feature type="short sequence motif" description="PTAP motif 1">
    <location>
        <begin position="649"/>
        <end position="652"/>
    </location>
</feature>
<feature type="short sequence motif" description="PTAP motif 2">
    <location>
        <begin position="661"/>
        <end position="664"/>
    </location>
</feature>
<feature type="compositionally biased region" description="Basic and acidic residues" evidence="4">
    <location>
        <begin position="291"/>
        <end position="314"/>
    </location>
</feature>
<feature type="modified residue" description="Phosphoserine" evidence="18">
    <location>
        <position position="234"/>
    </location>
</feature>
<feature type="modified residue" description="Phosphoserine" evidence="18 19">
    <location>
        <position position="604"/>
    </location>
</feature>
<feature type="splice variant" id="VSP_012660" description="In isoform 3." evidence="14">
    <location>
        <begin position="1"/>
        <end position="420"/>
    </location>
</feature>
<feature type="splice variant" id="VSP_012661" description="In isoform 2." evidence="14">
    <location>
        <begin position="474"/>
        <end position="500"/>
    </location>
</feature>
<feature type="sequence variant" id="VAR_021051" description="In dbSNP:rs1539567." evidence="6">
    <original>N</original>
    <variation>D</variation>
    <location>
        <position position="318"/>
    </location>
</feature>
<feature type="sequence variant" id="VAR_077460" description="In CMT2P; abolishes interaction with FUS; dbSNP:rs759312530." evidence="12">
    <original>C</original>
    <variation>R</variation>
    <location>
        <position position="694"/>
    </location>
</feature>
<feature type="sequence variant" id="VAR_077461" description="In CMT2P; uncertain significance; dbSNP:rs886041051." evidence="13">
    <original>C</original>
    <variation>Y</variation>
    <location>
        <position position="694"/>
    </location>
</feature>
<feature type="mutagenesis site" description="Abolishes interaction with TSG101." evidence="5">
    <location>
        <begin position="649"/>
        <end position="664"/>
    </location>
</feature>
<feature type="mutagenesis site" description="Abolishes ubiquitination of TSG101." evidence="5">
    <original>C</original>
    <variation>A</variation>
    <location>
        <position position="675"/>
    </location>
</feature>
<feature type="mutagenesis site" description="Abolishes ubiquitination of TSG101." evidence="5">
    <original>H</original>
    <variation>A</variation>
    <location>
        <position position="692"/>
    </location>
</feature>
<feature type="sequence conflict" description="In Ref. 2; BAB71119." evidence="17" ref="2">
    <original>V</original>
    <variation>F</variation>
    <location>
        <position position="385"/>
    </location>
</feature>
<feature type="sequence conflict" description="In Ref. 2; BAC03703." evidence="17" ref="2">
    <original>I</original>
    <variation>V</variation>
    <location>
        <position position="402"/>
    </location>
</feature>
<keyword id="KW-0025">Alternative splicing</keyword>
<keyword id="KW-0072">Autophagy</keyword>
<keyword id="KW-0144">Charcot-Marie-Tooth disease</keyword>
<keyword id="KW-0175">Coiled coil</keyword>
<keyword id="KW-0963">Cytoplasm</keyword>
<keyword id="KW-0225">Disease variant</keyword>
<keyword id="KW-0433">Leucine-rich repeat</keyword>
<keyword id="KW-0479">Metal-binding</keyword>
<keyword id="KW-0523">Neurodegeneration</keyword>
<keyword id="KW-0622">Neuropathy</keyword>
<keyword id="KW-0597">Phosphoprotein</keyword>
<keyword id="KW-0653">Protein transport</keyword>
<keyword id="KW-1267">Proteomics identification</keyword>
<keyword id="KW-1185">Reference proteome</keyword>
<keyword id="KW-0677">Repeat</keyword>
<keyword id="KW-0808">Transferase</keyword>
<keyword id="KW-0813">Transport</keyword>
<keyword id="KW-0832">Ubl conjugation</keyword>
<keyword id="KW-0833">Ubl conjugation pathway</keyword>
<keyword id="KW-0862">Zinc</keyword>
<keyword id="KW-0863">Zinc-finger</keyword>
<dbReference type="EC" id="2.3.2.27" evidence="5 10"/>
<dbReference type="EMBL" id="AY358830">
    <property type="protein sequence ID" value="AAQ89189.1"/>
    <property type="molecule type" value="mRNA"/>
</dbReference>
<dbReference type="EMBL" id="AK056203">
    <property type="protein sequence ID" value="BAB71119.1"/>
    <property type="molecule type" value="mRNA"/>
</dbReference>
<dbReference type="EMBL" id="AK056305">
    <property type="protein sequence ID" value="BAB71144.1"/>
    <property type="molecule type" value="mRNA"/>
</dbReference>
<dbReference type="EMBL" id="AK091589">
    <property type="protein sequence ID" value="BAC03703.1"/>
    <property type="molecule type" value="mRNA"/>
</dbReference>
<dbReference type="EMBL" id="AL445222">
    <property type="status" value="NOT_ANNOTATED_CDS"/>
    <property type="molecule type" value="Genomic_DNA"/>
</dbReference>
<dbReference type="EMBL" id="BC009239">
    <property type="protein sequence ID" value="AAH09239.1"/>
    <property type="molecule type" value="mRNA"/>
</dbReference>
<dbReference type="CCDS" id="CCDS55347.1">
    <molecule id="Q6UWE0-2"/>
</dbReference>
<dbReference type="CCDS" id="CCDS6873.1">
    <molecule id="Q6UWE0-1"/>
</dbReference>
<dbReference type="RefSeq" id="NP_001005373.1">
    <molecule id="Q6UWE0-1"/>
    <property type="nucleotide sequence ID" value="NM_001005373.4"/>
</dbReference>
<dbReference type="RefSeq" id="NP_001005374.1">
    <molecule id="Q6UWE0-1"/>
    <property type="nucleotide sequence ID" value="NM_001005374.4"/>
</dbReference>
<dbReference type="RefSeq" id="NP_001177652.1">
    <molecule id="Q6UWE0-2"/>
    <property type="nucleotide sequence ID" value="NM_001190723.3"/>
</dbReference>
<dbReference type="RefSeq" id="NP_001371071.1">
    <molecule id="Q6UWE0-1"/>
    <property type="nucleotide sequence ID" value="NM_001384142.1"/>
</dbReference>
<dbReference type="RefSeq" id="NP_612370.3">
    <molecule id="Q6UWE0-1"/>
    <property type="nucleotide sequence ID" value="NM_138361.5"/>
</dbReference>
<dbReference type="RefSeq" id="XP_016870772.1">
    <property type="nucleotide sequence ID" value="XM_017015283.1"/>
</dbReference>
<dbReference type="SASBDB" id="Q6UWE0"/>
<dbReference type="SMR" id="Q6UWE0"/>
<dbReference type="BioGRID" id="124754">
    <property type="interactions" value="87"/>
</dbReference>
<dbReference type="ELM" id="Q6UWE0"/>
<dbReference type="FunCoup" id="Q6UWE0">
    <property type="interactions" value="826"/>
</dbReference>
<dbReference type="IntAct" id="Q6UWE0">
    <property type="interactions" value="148"/>
</dbReference>
<dbReference type="MINT" id="Q6UWE0"/>
<dbReference type="STRING" id="9606.ENSP00000322937"/>
<dbReference type="MoonDB" id="Q6UWE0">
    <property type="type" value="Predicted"/>
</dbReference>
<dbReference type="GlyGen" id="Q6UWE0">
    <property type="glycosylation" value="3 sites, 2 O-linked glycans (1 site)"/>
</dbReference>
<dbReference type="iPTMnet" id="Q6UWE0"/>
<dbReference type="MetOSite" id="Q6UWE0"/>
<dbReference type="PhosphoSitePlus" id="Q6UWE0"/>
<dbReference type="BioMuta" id="LRSAM1"/>
<dbReference type="DMDM" id="62511890"/>
<dbReference type="jPOST" id="Q6UWE0"/>
<dbReference type="MassIVE" id="Q6UWE0"/>
<dbReference type="PaxDb" id="9606-ENSP00000322937"/>
<dbReference type="PeptideAtlas" id="Q6UWE0"/>
<dbReference type="ProteomicsDB" id="67465">
    <molecule id="Q6UWE0-1"/>
</dbReference>
<dbReference type="ProteomicsDB" id="67466">
    <molecule id="Q6UWE0-2"/>
</dbReference>
<dbReference type="ProteomicsDB" id="67467">
    <molecule id="Q6UWE0-3"/>
</dbReference>
<dbReference type="Pumba" id="Q6UWE0"/>
<dbReference type="Antibodypedia" id="16985">
    <property type="antibodies" value="171 antibodies from 27 providers"/>
</dbReference>
<dbReference type="DNASU" id="90678"/>
<dbReference type="Ensembl" id="ENST00000300417.11">
    <molecule id="Q6UWE0-1"/>
    <property type="protein sequence ID" value="ENSP00000300417.6"/>
    <property type="gene ID" value="ENSG00000148356.15"/>
</dbReference>
<dbReference type="Ensembl" id="ENST00000323301.8">
    <molecule id="Q6UWE0-1"/>
    <property type="protein sequence ID" value="ENSP00000322937.4"/>
    <property type="gene ID" value="ENSG00000148356.15"/>
</dbReference>
<dbReference type="Ensembl" id="ENST00000373322.1">
    <molecule id="Q6UWE0-1"/>
    <property type="protein sequence ID" value="ENSP00000362419.1"/>
    <property type="gene ID" value="ENSG00000148356.15"/>
</dbReference>
<dbReference type="Ensembl" id="ENST00000373324.8">
    <molecule id="Q6UWE0-2"/>
    <property type="protein sequence ID" value="ENSP00000362421.4"/>
    <property type="gene ID" value="ENSG00000148356.15"/>
</dbReference>
<dbReference type="Ensembl" id="ENST00000675448.1">
    <molecule id="Q6UWE0-1"/>
    <property type="protein sequence ID" value="ENSP00000502167.1"/>
    <property type="gene ID" value="ENSG00000148356.15"/>
</dbReference>
<dbReference type="Ensembl" id="ENST00000675883.1">
    <molecule id="Q6UWE0-2"/>
    <property type="protein sequence ID" value="ENSP00000501592.1"/>
    <property type="gene ID" value="ENSG00000148356.15"/>
</dbReference>
<dbReference type="GeneID" id="90678"/>
<dbReference type="KEGG" id="hsa:90678"/>
<dbReference type="MANE-Select" id="ENST00000300417.11">
    <property type="protein sequence ID" value="ENSP00000300417.6"/>
    <property type="RefSeq nucleotide sequence ID" value="NM_001005373.4"/>
    <property type="RefSeq protein sequence ID" value="NP_001005373.1"/>
</dbReference>
<dbReference type="UCSC" id="uc004brb.2">
    <molecule id="Q6UWE0-1"/>
    <property type="organism name" value="human"/>
</dbReference>
<dbReference type="AGR" id="HGNC:25135"/>
<dbReference type="CTD" id="90678"/>
<dbReference type="DisGeNET" id="90678"/>
<dbReference type="GeneCards" id="LRSAM1"/>
<dbReference type="GeneReviews" id="LRSAM1"/>
<dbReference type="HGNC" id="HGNC:25135">
    <property type="gene designation" value="LRSAM1"/>
</dbReference>
<dbReference type="HPA" id="ENSG00000148356">
    <property type="expression patterns" value="Low tissue specificity"/>
</dbReference>
<dbReference type="MalaCards" id="LRSAM1"/>
<dbReference type="MIM" id="610933">
    <property type="type" value="gene"/>
</dbReference>
<dbReference type="MIM" id="614436">
    <property type="type" value="phenotype"/>
</dbReference>
<dbReference type="neXtProt" id="NX_Q6UWE0"/>
<dbReference type="OpenTargets" id="ENSG00000148356"/>
<dbReference type="Orphanet" id="300319">
    <property type="disease" value="Charcot-Marie-Tooth disease type 2P"/>
</dbReference>
<dbReference type="PharmGKB" id="PA134890010"/>
<dbReference type="VEuPathDB" id="HostDB:ENSG00000148356"/>
<dbReference type="eggNOG" id="KOG0619">
    <property type="taxonomic scope" value="Eukaryota"/>
</dbReference>
<dbReference type="GeneTree" id="ENSGT00930000151044"/>
<dbReference type="HOGENOM" id="CLU_022990_0_0_1"/>
<dbReference type="InParanoid" id="Q6UWE0"/>
<dbReference type="OMA" id="LWCSSEC"/>
<dbReference type="OrthoDB" id="1711136at2759"/>
<dbReference type="PAN-GO" id="Q6UWE0">
    <property type="GO annotations" value="0 GO annotations based on evolutionary models"/>
</dbReference>
<dbReference type="PhylomeDB" id="Q6UWE0"/>
<dbReference type="TreeFam" id="TF329645"/>
<dbReference type="PathwayCommons" id="Q6UWE0"/>
<dbReference type="Reactome" id="R-HSA-983168">
    <property type="pathway name" value="Antigen processing: Ubiquitination &amp; Proteasome degradation"/>
</dbReference>
<dbReference type="SignaLink" id="Q6UWE0"/>
<dbReference type="SIGNOR" id="Q6UWE0"/>
<dbReference type="UniPathway" id="UPA00143"/>
<dbReference type="BioGRID-ORCS" id="90678">
    <property type="hits" value="18 hits in 1198 CRISPR screens"/>
</dbReference>
<dbReference type="CD-CODE" id="FB4E32DD">
    <property type="entry name" value="Presynaptic clusters and postsynaptic densities"/>
</dbReference>
<dbReference type="ChiTaRS" id="LRSAM1">
    <property type="organism name" value="human"/>
</dbReference>
<dbReference type="GeneWiki" id="LRSAM1"/>
<dbReference type="GenomeRNAi" id="90678"/>
<dbReference type="Pharos" id="Q6UWE0">
    <property type="development level" value="Tbio"/>
</dbReference>
<dbReference type="PRO" id="PR:Q6UWE0"/>
<dbReference type="Proteomes" id="UP000005640">
    <property type="component" value="Chromosome 9"/>
</dbReference>
<dbReference type="RNAct" id="Q6UWE0">
    <property type="molecule type" value="protein"/>
</dbReference>
<dbReference type="Bgee" id="ENSG00000148356">
    <property type="expression patterns" value="Expressed in apex of heart and 124 other cell types or tissues"/>
</dbReference>
<dbReference type="ExpressionAtlas" id="Q6UWE0">
    <property type="expression patterns" value="baseline and differential"/>
</dbReference>
<dbReference type="GO" id="GO:0005737">
    <property type="term" value="C:cytoplasm"/>
    <property type="evidence" value="ECO:0000314"/>
    <property type="project" value="UniProtKB"/>
</dbReference>
<dbReference type="GO" id="GO:0005829">
    <property type="term" value="C:cytosol"/>
    <property type="evidence" value="ECO:0000314"/>
    <property type="project" value="HPA"/>
</dbReference>
<dbReference type="GO" id="GO:0016020">
    <property type="term" value="C:membrane"/>
    <property type="evidence" value="ECO:0000314"/>
    <property type="project" value="UniProtKB"/>
</dbReference>
<dbReference type="GO" id="GO:0061630">
    <property type="term" value="F:ubiquitin protein ligase activity"/>
    <property type="evidence" value="ECO:0000314"/>
    <property type="project" value="GO_Central"/>
</dbReference>
<dbReference type="GO" id="GO:0004842">
    <property type="term" value="F:ubiquitin-protein transferase activity"/>
    <property type="evidence" value="ECO:0000314"/>
    <property type="project" value="UniProtKB"/>
</dbReference>
<dbReference type="GO" id="GO:0008270">
    <property type="term" value="F:zinc ion binding"/>
    <property type="evidence" value="ECO:0007669"/>
    <property type="project" value="UniProtKB-KW"/>
</dbReference>
<dbReference type="GO" id="GO:0006914">
    <property type="term" value="P:autophagy"/>
    <property type="evidence" value="ECO:0007669"/>
    <property type="project" value="UniProtKB-KW"/>
</dbReference>
<dbReference type="GO" id="GO:0045806">
    <property type="term" value="P:negative regulation of endocytosis"/>
    <property type="evidence" value="ECO:0000315"/>
    <property type="project" value="UniProtKB"/>
</dbReference>
<dbReference type="GO" id="GO:2000786">
    <property type="term" value="P:positive regulation of autophagosome assembly"/>
    <property type="evidence" value="ECO:0000315"/>
    <property type="project" value="GO_Central"/>
</dbReference>
<dbReference type="GO" id="GO:1904417">
    <property type="term" value="P:positive regulation of xenophagy"/>
    <property type="evidence" value="ECO:0000315"/>
    <property type="project" value="GO_Central"/>
</dbReference>
<dbReference type="GO" id="GO:0051865">
    <property type="term" value="P:protein autoubiquitination"/>
    <property type="evidence" value="ECO:0000314"/>
    <property type="project" value="UniProtKB"/>
</dbReference>
<dbReference type="GO" id="GO:0030163">
    <property type="term" value="P:protein catabolic process"/>
    <property type="evidence" value="ECO:0000315"/>
    <property type="project" value="UniProtKB"/>
</dbReference>
<dbReference type="GO" id="GO:0000209">
    <property type="term" value="P:protein polyubiquitination"/>
    <property type="evidence" value="ECO:0000314"/>
    <property type="project" value="UniProtKB"/>
</dbReference>
<dbReference type="GO" id="GO:0070086">
    <property type="term" value="P:ubiquitin-dependent endocytosis"/>
    <property type="evidence" value="ECO:0000314"/>
    <property type="project" value="UniProtKB"/>
</dbReference>
<dbReference type="GO" id="GO:0046755">
    <property type="term" value="P:viral budding"/>
    <property type="evidence" value="ECO:0000315"/>
    <property type="project" value="UniProtKB"/>
</dbReference>
<dbReference type="CDD" id="cd16515">
    <property type="entry name" value="RING-HC_LRSAM1"/>
    <property type="match status" value="1"/>
</dbReference>
<dbReference type="CDD" id="cd09523">
    <property type="entry name" value="SAM_TAL"/>
    <property type="match status" value="1"/>
</dbReference>
<dbReference type="FunFam" id="3.30.40.10:FF:000252">
    <property type="entry name" value="E3 ubiquitin-protein ligase LRSAM1 isoform 1"/>
    <property type="match status" value="1"/>
</dbReference>
<dbReference type="FunFam" id="3.80.10.10:FF:000174">
    <property type="entry name" value="E3 ubiquitin-protein ligase LRSAM1 isoform 1"/>
    <property type="match status" value="1"/>
</dbReference>
<dbReference type="FunFam" id="1.10.150.50:FF:000059">
    <property type="entry name" value="E3 ubiquitin-protein ligase LRSAM1 isoform X1"/>
    <property type="match status" value="1"/>
</dbReference>
<dbReference type="Gene3D" id="3.80.10.10">
    <property type="entry name" value="Ribonuclease Inhibitor"/>
    <property type="match status" value="1"/>
</dbReference>
<dbReference type="Gene3D" id="1.10.150.50">
    <property type="entry name" value="Transcription Factor, Ets-1"/>
    <property type="match status" value="1"/>
</dbReference>
<dbReference type="Gene3D" id="3.30.40.10">
    <property type="entry name" value="Zinc/RING finger domain, C3HC4 (zinc finger)"/>
    <property type="match status" value="1"/>
</dbReference>
<dbReference type="InterPro" id="IPR001611">
    <property type="entry name" value="Leu-rich_rpt"/>
</dbReference>
<dbReference type="InterPro" id="IPR003591">
    <property type="entry name" value="Leu-rich_rpt_typical-subtyp"/>
</dbReference>
<dbReference type="InterPro" id="IPR032675">
    <property type="entry name" value="LRR_dom_sf"/>
</dbReference>
<dbReference type="InterPro" id="IPR050216">
    <property type="entry name" value="LRR_domain-containing"/>
</dbReference>
<dbReference type="InterPro" id="IPR055414">
    <property type="entry name" value="LRR_R13L4/SHOC2-like"/>
</dbReference>
<dbReference type="InterPro" id="IPR001660">
    <property type="entry name" value="SAM"/>
</dbReference>
<dbReference type="InterPro" id="IPR013761">
    <property type="entry name" value="SAM/pointed_sf"/>
</dbReference>
<dbReference type="InterPro" id="IPR001841">
    <property type="entry name" value="Znf_RING"/>
</dbReference>
<dbReference type="InterPro" id="IPR013083">
    <property type="entry name" value="Znf_RING/FYVE/PHD"/>
</dbReference>
<dbReference type="PANTHER" id="PTHR48051">
    <property type="match status" value="1"/>
</dbReference>
<dbReference type="PANTHER" id="PTHR48051:SF47">
    <property type="entry name" value="LEUCINE RICH REPEAT AND STERILE ALPHA MOTIF CONTAINING 1"/>
    <property type="match status" value="1"/>
</dbReference>
<dbReference type="Pfam" id="PF23598">
    <property type="entry name" value="LRR_14"/>
    <property type="match status" value="1"/>
</dbReference>
<dbReference type="Pfam" id="PF07647">
    <property type="entry name" value="SAM_2"/>
    <property type="match status" value="1"/>
</dbReference>
<dbReference type="Pfam" id="PF13920">
    <property type="entry name" value="zf-C3HC4_3"/>
    <property type="match status" value="1"/>
</dbReference>
<dbReference type="SMART" id="SM00364">
    <property type="entry name" value="LRR_BAC"/>
    <property type="match status" value="4"/>
</dbReference>
<dbReference type="SMART" id="SM00369">
    <property type="entry name" value="LRR_TYP"/>
    <property type="match status" value="4"/>
</dbReference>
<dbReference type="SMART" id="SM00454">
    <property type="entry name" value="SAM"/>
    <property type="match status" value="1"/>
</dbReference>
<dbReference type="SUPFAM" id="SSF52058">
    <property type="entry name" value="L domain-like"/>
    <property type="match status" value="1"/>
</dbReference>
<dbReference type="SUPFAM" id="SSF57850">
    <property type="entry name" value="RING/U-box"/>
    <property type="match status" value="1"/>
</dbReference>
<dbReference type="SUPFAM" id="SSF47769">
    <property type="entry name" value="SAM/Pointed domain"/>
    <property type="match status" value="1"/>
</dbReference>
<dbReference type="PROSITE" id="PS51450">
    <property type="entry name" value="LRR"/>
    <property type="match status" value="4"/>
</dbReference>
<dbReference type="PROSITE" id="PS50105">
    <property type="entry name" value="SAM_DOMAIN"/>
    <property type="match status" value="1"/>
</dbReference>
<dbReference type="PROSITE" id="PS50089">
    <property type="entry name" value="ZF_RING_2"/>
    <property type="match status" value="1"/>
</dbReference>
<accession>Q6UWE0</accession>
<accession>Q5VVV0</accession>
<accession>Q8NB40</accession>
<accession>Q96GT5</accession>
<accession>Q96MX5</accession>
<accession>Q96MZ7</accession>
<evidence type="ECO:0000255" key="1"/>
<evidence type="ECO:0000255" key="2">
    <source>
        <dbReference type="PROSITE-ProRule" id="PRU00175"/>
    </source>
</evidence>
<evidence type="ECO:0000255" key="3">
    <source>
        <dbReference type="PROSITE-ProRule" id="PRU00184"/>
    </source>
</evidence>
<evidence type="ECO:0000256" key="4">
    <source>
        <dbReference type="SAM" id="MobiDB-lite"/>
    </source>
</evidence>
<evidence type="ECO:0000269" key="5">
    <source>
    </source>
</evidence>
<evidence type="ECO:0000269" key="6">
    <source>
    </source>
</evidence>
<evidence type="ECO:0000269" key="7">
    <source>
    </source>
</evidence>
<evidence type="ECO:0000269" key="8">
    <source>
    </source>
</evidence>
<evidence type="ECO:0000269" key="9">
    <source>
    </source>
</evidence>
<evidence type="ECO:0000269" key="10">
    <source>
    </source>
</evidence>
<evidence type="ECO:0000269" key="11">
    <source>
    </source>
</evidence>
<evidence type="ECO:0000269" key="12">
    <source>
    </source>
</evidence>
<evidence type="ECO:0000269" key="13">
    <source>
    </source>
</evidence>
<evidence type="ECO:0000303" key="14">
    <source>
    </source>
</evidence>
<evidence type="ECO:0000303" key="15">
    <source>
    </source>
</evidence>
<evidence type="ECO:0000303" key="16">
    <source>
    </source>
</evidence>
<evidence type="ECO:0000305" key="17"/>
<evidence type="ECO:0007744" key="18">
    <source>
    </source>
</evidence>
<evidence type="ECO:0007744" key="19">
    <source>
    </source>
</evidence>
<organism>
    <name type="scientific">Homo sapiens</name>
    <name type="common">Human</name>
    <dbReference type="NCBI Taxonomy" id="9606"/>
    <lineage>
        <taxon>Eukaryota</taxon>
        <taxon>Metazoa</taxon>
        <taxon>Chordata</taxon>
        <taxon>Craniata</taxon>
        <taxon>Vertebrata</taxon>
        <taxon>Euteleostomi</taxon>
        <taxon>Mammalia</taxon>
        <taxon>Eutheria</taxon>
        <taxon>Euarchontoglires</taxon>
        <taxon>Primates</taxon>
        <taxon>Haplorrhini</taxon>
        <taxon>Catarrhini</taxon>
        <taxon>Hominidae</taxon>
        <taxon>Homo</taxon>
    </lineage>
</organism>